<reference key="1">
    <citation type="submission" date="2005-09" db="EMBL/GenBank/DDBJ databases">
        <title>Complete genome sequence of Clostridium kluyveri and comparative genomics of Clostridia species.</title>
        <authorList>
            <person name="Inui M."/>
            <person name="Nonaka H."/>
            <person name="Shinoda Y."/>
            <person name="Ikenaga Y."/>
            <person name="Abe M."/>
            <person name="Naito K."/>
            <person name="Vertes A.A."/>
            <person name="Yukawa H."/>
        </authorList>
    </citation>
    <scope>NUCLEOTIDE SEQUENCE [LARGE SCALE GENOMIC DNA]</scope>
    <source>
        <strain>NBRC 12016</strain>
    </source>
</reference>
<organism>
    <name type="scientific">Clostridium kluyveri (strain NBRC 12016)</name>
    <dbReference type="NCBI Taxonomy" id="583346"/>
    <lineage>
        <taxon>Bacteria</taxon>
        <taxon>Bacillati</taxon>
        <taxon>Bacillota</taxon>
        <taxon>Clostridia</taxon>
        <taxon>Eubacteriales</taxon>
        <taxon>Clostridiaceae</taxon>
        <taxon>Clostridium</taxon>
    </lineage>
</organism>
<name>SSRP_CLOK1</name>
<protein>
    <recommendedName>
        <fullName evidence="1">SsrA-binding protein</fullName>
    </recommendedName>
    <alternativeName>
        <fullName evidence="1">Small protein B</fullName>
    </alternativeName>
</protein>
<gene>
    <name evidence="1" type="primary">smpB</name>
    <name type="ordered locus">CKR_2982</name>
</gene>
<comment type="function">
    <text evidence="1">Required for rescue of stalled ribosomes mediated by trans-translation. Binds to transfer-messenger RNA (tmRNA), required for stable association of tmRNA with ribosomes. tmRNA and SmpB together mimic tRNA shape, replacing the anticodon stem-loop with SmpB. tmRNA is encoded by the ssrA gene; the 2 termini fold to resemble tRNA(Ala) and it encodes a 'tag peptide', a short internal open reading frame. During trans-translation Ala-aminoacylated tmRNA acts like a tRNA, entering the A-site of stalled ribosomes, displacing the stalled mRNA. The ribosome then switches to translate the ORF on the tmRNA; the nascent peptide is terminated with the 'tag peptide' encoded by the tmRNA and targeted for degradation. The ribosome is freed to recommence translation, which seems to be the essential function of trans-translation.</text>
</comment>
<comment type="subcellular location">
    <subcellularLocation>
        <location evidence="1">Cytoplasm</location>
    </subcellularLocation>
    <text evidence="1">The tmRNA-SmpB complex associates with stalled 70S ribosomes.</text>
</comment>
<comment type="similarity">
    <text evidence="1">Belongs to the SmpB family.</text>
</comment>
<sequence>MSAKNKSNNKTLAENRKARHDYFIEESMEAGIQLVGTEVKSIRAGKSNLKDSYGEIINGEIFIRNMHISPYEKGNIFNRDPLRDRKLLLHKKEIARLLGYTAQQGYTIVPLSLYLKNGRVKVNLAVAKGKKNYDKRDSMLEKAAKRDIERQMKERFR</sequence>
<keyword id="KW-0963">Cytoplasm</keyword>
<keyword id="KW-0694">RNA-binding</keyword>
<feature type="chain" id="PRO_1000116858" description="SsrA-binding protein">
    <location>
        <begin position="1"/>
        <end position="157"/>
    </location>
</feature>
<proteinExistence type="inferred from homology"/>
<dbReference type="EMBL" id="AP009049">
    <property type="protein sequence ID" value="BAH08033.1"/>
    <property type="molecule type" value="Genomic_DNA"/>
</dbReference>
<dbReference type="RefSeq" id="WP_012103708.1">
    <property type="nucleotide sequence ID" value="NC_011837.1"/>
</dbReference>
<dbReference type="SMR" id="B9E6A8"/>
<dbReference type="KEGG" id="ckr:CKR_2982"/>
<dbReference type="HOGENOM" id="CLU_108953_0_0_9"/>
<dbReference type="Proteomes" id="UP000007969">
    <property type="component" value="Chromosome"/>
</dbReference>
<dbReference type="GO" id="GO:0005829">
    <property type="term" value="C:cytosol"/>
    <property type="evidence" value="ECO:0007669"/>
    <property type="project" value="TreeGrafter"/>
</dbReference>
<dbReference type="GO" id="GO:0003723">
    <property type="term" value="F:RNA binding"/>
    <property type="evidence" value="ECO:0007669"/>
    <property type="project" value="UniProtKB-UniRule"/>
</dbReference>
<dbReference type="GO" id="GO:0070929">
    <property type="term" value="P:trans-translation"/>
    <property type="evidence" value="ECO:0007669"/>
    <property type="project" value="UniProtKB-UniRule"/>
</dbReference>
<dbReference type="CDD" id="cd09294">
    <property type="entry name" value="SmpB"/>
    <property type="match status" value="1"/>
</dbReference>
<dbReference type="Gene3D" id="2.40.280.10">
    <property type="match status" value="1"/>
</dbReference>
<dbReference type="HAMAP" id="MF_00023">
    <property type="entry name" value="SmpB"/>
    <property type="match status" value="1"/>
</dbReference>
<dbReference type="InterPro" id="IPR023620">
    <property type="entry name" value="SmpB"/>
</dbReference>
<dbReference type="InterPro" id="IPR000037">
    <property type="entry name" value="SsrA-bd_prot"/>
</dbReference>
<dbReference type="InterPro" id="IPR020081">
    <property type="entry name" value="SsrA-bd_prot_CS"/>
</dbReference>
<dbReference type="NCBIfam" id="NF003843">
    <property type="entry name" value="PRK05422.1"/>
    <property type="match status" value="1"/>
</dbReference>
<dbReference type="NCBIfam" id="TIGR00086">
    <property type="entry name" value="smpB"/>
    <property type="match status" value="1"/>
</dbReference>
<dbReference type="PANTHER" id="PTHR30308:SF2">
    <property type="entry name" value="SSRA-BINDING PROTEIN"/>
    <property type="match status" value="1"/>
</dbReference>
<dbReference type="PANTHER" id="PTHR30308">
    <property type="entry name" value="TMRNA-BINDING COMPONENT OF TRANS-TRANSLATION TAGGING COMPLEX"/>
    <property type="match status" value="1"/>
</dbReference>
<dbReference type="Pfam" id="PF01668">
    <property type="entry name" value="SmpB"/>
    <property type="match status" value="1"/>
</dbReference>
<dbReference type="SUPFAM" id="SSF74982">
    <property type="entry name" value="Small protein B (SmpB)"/>
    <property type="match status" value="1"/>
</dbReference>
<dbReference type="PROSITE" id="PS01317">
    <property type="entry name" value="SSRP"/>
    <property type="match status" value="1"/>
</dbReference>
<accession>B9E6A8</accession>
<evidence type="ECO:0000255" key="1">
    <source>
        <dbReference type="HAMAP-Rule" id="MF_00023"/>
    </source>
</evidence>